<protein>
    <recommendedName>
        <fullName evidence="7">MFS-type transporter kojT</fullName>
    </recommendedName>
    <alternativeName>
        <fullName evidence="7">Kojic acid biosynthesis cluster protein T</fullName>
    </alternativeName>
    <alternativeName>
        <fullName evidence="7">Kojic acid transporter</fullName>
    </alternativeName>
</protein>
<keyword id="KW-1003">Cell membrane</keyword>
<keyword id="KW-0325">Glycoprotein</keyword>
<keyword id="KW-0472">Membrane</keyword>
<keyword id="KW-0812">Transmembrane</keyword>
<keyword id="KW-1133">Transmembrane helix</keyword>
<keyword id="KW-0813">Transport</keyword>
<reference key="1">
    <citation type="journal article" date="2015" name="Genome Announc.">
        <title>Genome sequence of Aspergillus flavus NRRL 3357, a strain that causes aflatoxin contamination of food and feed.</title>
        <authorList>
            <person name="Nierman W.C."/>
            <person name="Yu J."/>
            <person name="Fedorova-Abrams N.D."/>
            <person name="Losada L."/>
            <person name="Cleveland T.E."/>
            <person name="Bhatnagar D."/>
            <person name="Bennett J.W."/>
            <person name="Dean R."/>
            <person name="Payne G.A."/>
        </authorList>
    </citation>
    <scope>NUCLEOTIDE SEQUENCE [LARGE SCALE GENOMIC DNA]</scope>
    <source>
        <strain>ATCC 200026 / FGSC A1120 / IAM 13836 / NRRL 3357 / JCM 12722 / SRRC 167</strain>
    </source>
</reference>
<reference key="2">
    <citation type="journal article" date="1994" name="J. Pharm. Pharmacol.">
        <title>Kojic acid, a cosmetic skin whitening agent, is a slow-binding inhibitor of catecholase activity of tyrosinase.</title>
        <authorList>
            <person name="Cabanes J."/>
            <person name="Chazarra S."/>
            <person name="Garcia-Carmona F."/>
        </authorList>
    </citation>
    <scope>BIOTECHNOLOGY</scope>
</reference>
<reference key="3">
    <citation type="journal article" date="2006" name="Nat. Prod. Rep.">
        <title>From miso, sake and shoyu to cosmetics: a century of science for kojic acid.</title>
        <authorList>
            <person name="Bentley R."/>
        </authorList>
    </citation>
    <scope>REVIEW ON BIOTECHNOLOGY</scope>
</reference>
<reference key="4">
    <citation type="journal article" date="2016" name="J. Microbiol. Biotechnol.">
        <title>Nematicidal activity of kojic acid produced by Aspergillus oryzae against Meloidogyne incognita.</title>
        <authorList>
            <person name="Kim T.Y."/>
            <person name="Jang J.Y."/>
            <person name="Jeon S.J."/>
            <person name="Lee H.W."/>
            <person name="Bae C.H."/>
            <person name="Yeo J.H."/>
            <person name="Lee H.B."/>
            <person name="Kim I.S."/>
            <person name="Park H.W."/>
            <person name="Kim J.C."/>
        </authorList>
    </citation>
    <scope>BIOTECHNOLOGY</scope>
</reference>
<reference key="5">
    <citation type="journal article" date="2023" name="J. Fungi">
        <title>Kojic Acid Gene Clusters and the Transcriptional Activation Mechanism of Aspergillus flavus KojR on Expression of Clustered Genes.</title>
        <authorList>
            <person name="Chang P.K."/>
            <person name="Scharfenstein L.L."/>
            <person name="Mahoney N."/>
            <person name="Kong Q."/>
        </authorList>
    </citation>
    <scope>FUNCTION</scope>
    <scope>INDUCTION</scope>
</reference>
<gene>
    <name evidence="7" type="primary">kojT</name>
    <name type="ORF">AFLA_096060</name>
</gene>
<dbReference type="EMBL" id="EQ963480">
    <property type="protein sequence ID" value="EED49524.1"/>
    <property type="molecule type" value="Genomic_DNA"/>
</dbReference>
<dbReference type="RefSeq" id="XP_002381425.1">
    <property type="nucleotide sequence ID" value="XM_002381384.1"/>
</dbReference>
<dbReference type="STRING" id="332952.B8NL22"/>
<dbReference type="EnsemblFungi" id="EED49524">
    <property type="protein sequence ID" value="EED49524"/>
    <property type="gene ID" value="AFLA_096060"/>
</dbReference>
<dbReference type="VEuPathDB" id="FungiDB:AFLA_009847"/>
<dbReference type="eggNOG" id="KOG0255">
    <property type="taxonomic scope" value="Eukaryota"/>
</dbReference>
<dbReference type="HOGENOM" id="CLU_008455_11_1_1"/>
<dbReference type="OMA" id="QLAFRFI"/>
<dbReference type="GO" id="GO:0005886">
    <property type="term" value="C:plasma membrane"/>
    <property type="evidence" value="ECO:0007669"/>
    <property type="project" value="UniProtKB-SubCell"/>
</dbReference>
<dbReference type="GO" id="GO:0022857">
    <property type="term" value="F:transmembrane transporter activity"/>
    <property type="evidence" value="ECO:0007669"/>
    <property type="project" value="InterPro"/>
</dbReference>
<dbReference type="CDD" id="cd17323">
    <property type="entry name" value="MFS_Tpo1_MDR_like"/>
    <property type="match status" value="1"/>
</dbReference>
<dbReference type="FunFam" id="1.20.1250.20:FF:000082">
    <property type="entry name" value="MFS multidrug transporter, putative"/>
    <property type="match status" value="1"/>
</dbReference>
<dbReference type="Gene3D" id="1.20.1250.20">
    <property type="entry name" value="MFS general substrate transporter like domains"/>
    <property type="match status" value="1"/>
</dbReference>
<dbReference type="InterPro" id="IPR011701">
    <property type="entry name" value="MFS"/>
</dbReference>
<dbReference type="InterPro" id="IPR020846">
    <property type="entry name" value="MFS_dom"/>
</dbReference>
<dbReference type="InterPro" id="IPR036259">
    <property type="entry name" value="MFS_trans_sf"/>
</dbReference>
<dbReference type="PANTHER" id="PTHR23502">
    <property type="entry name" value="MAJOR FACILITATOR SUPERFAMILY"/>
    <property type="match status" value="1"/>
</dbReference>
<dbReference type="PANTHER" id="PTHR23502:SF47">
    <property type="entry name" value="MAJOR FACILITATOR SUPERFAMILY (MFS) PROFILE DOMAIN-CONTAINING PROTEIN-RELATED"/>
    <property type="match status" value="1"/>
</dbReference>
<dbReference type="Pfam" id="PF07690">
    <property type="entry name" value="MFS_1"/>
    <property type="match status" value="1"/>
</dbReference>
<dbReference type="SUPFAM" id="SSF103473">
    <property type="entry name" value="MFS general substrate transporter"/>
    <property type="match status" value="1"/>
</dbReference>
<dbReference type="PROSITE" id="PS50850">
    <property type="entry name" value="MFS"/>
    <property type="match status" value="1"/>
</dbReference>
<feature type="chain" id="PRO_0000458978" description="MFS-type transporter kojT">
    <location>
        <begin position="1"/>
        <end position="564"/>
    </location>
</feature>
<feature type="transmembrane region" description="Helical" evidence="1">
    <location>
        <begin position="120"/>
        <end position="140"/>
    </location>
</feature>
<feature type="transmembrane region" description="Helical" evidence="1">
    <location>
        <begin position="159"/>
        <end position="179"/>
    </location>
</feature>
<feature type="transmembrane region" description="Helical" evidence="1">
    <location>
        <begin position="187"/>
        <end position="207"/>
    </location>
</feature>
<feature type="transmembrane region" description="Helical" evidence="1">
    <location>
        <begin position="217"/>
        <end position="237"/>
    </location>
</feature>
<feature type="transmembrane region" description="Helical" evidence="1">
    <location>
        <begin position="249"/>
        <end position="269"/>
    </location>
</feature>
<feature type="transmembrane region" description="Helical" evidence="1">
    <location>
        <begin position="278"/>
        <end position="298"/>
    </location>
</feature>
<feature type="transmembrane region" description="Helical" evidence="1">
    <location>
        <begin position="353"/>
        <end position="373"/>
    </location>
</feature>
<feature type="transmembrane region" description="Helical" evidence="1">
    <location>
        <begin position="389"/>
        <end position="409"/>
    </location>
</feature>
<feature type="transmembrane region" description="Helical" evidence="1">
    <location>
        <begin position="437"/>
        <end position="457"/>
    </location>
</feature>
<feature type="transmembrane region" description="Helical" evidence="1">
    <location>
        <begin position="462"/>
        <end position="482"/>
    </location>
</feature>
<feature type="transmembrane region" description="Helical" evidence="1">
    <location>
        <begin position="500"/>
        <end position="520"/>
    </location>
</feature>
<feature type="transmembrane region" description="Helical" evidence="1">
    <location>
        <begin position="530"/>
        <end position="550"/>
    </location>
</feature>
<feature type="glycosylation site" description="N-linked (GlcNAc...) asparagine" evidence="2">
    <location>
        <position position="113"/>
    </location>
</feature>
<evidence type="ECO:0000255" key="1"/>
<evidence type="ECO:0000255" key="2">
    <source>
        <dbReference type="PROSITE-ProRule" id="PRU00498"/>
    </source>
</evidence>
<evidence type="ECO:0000269" key="3">
    <source>
    </source>
</evidence>
<evidence type="ECO:0000269" key="4">
    <source>
    </source>
</evidence>
<evidence type="ECO:0000269" key="5">
    <source>
    </source>
</evidence>
<evidence type="ECO:0000269" key="6">
    <source>
    </source>
</evidence>
<evidence type="ECO:0000303" key="7">
    <source>
    </source>
</evidence>
<evidence type="ECO:0000305" key="8"/>
<evidence type="ECO:0000305" key="9">
    <source>
    </source>
</evidence>
<comment type="function">
    <text evidence="5 9">MFS-type transporter; part of the gene cluster that mediates the biosynthesis of 5-hydroxy-2-hydroxymethyl-1,4-pyrone, also know as kojic acid, a by-product in the fermentation process of malting rice that acts as a chelation agent (PubMed:36836373). Involved in the seretion of kojic acid (Probable).</text>
</comment>
<comment type="subcellular location">
    <subcellularLocation>
        <location evidence="9">Cell membrane</location>
        <topology evidence="1">Multi-pass membrane protein</topology>
    </subcellularLocation>
</comment>
<comment type="induction">
    <text evidence="5">Expression is controlled by the kojic acid gene cluster transcription factor kojR.</text>
</comment>
<comment type="biotechnology">
    <text evidence="3 4 6">Kojic acid can be used for several biotechnological applications, including use as an antibiotic, as an additive to prevent browning of food materials, and as an antioxidant (PubMed:17119644). Kojic acid is also interesting as an inhibitor of tyrosinase (PubMed:7714722). Finally, kojic acid has also been shown to have strong nematicidal activity (PubMed:27197670).</text>
</comment>
<comment type="similarity">
    <text evidence="8">Belongs to the major facilitator superfamily.</text>
</comment>
<accession>B8NL22</accession>
<organism>
    <name type="scientific">Aspergillus flavus (strain ATCC 200026 / FGSC A1120 / IAM 13836 / NRRL 3357 / JCM 12722 / SRRC 167)</name>
    <dbReference type="NCBI Taxonomy" id="332952"/>
    <lineage>
        <taxon>Eukaryota</taxon>
        <taxon>Fungi</taxon>
        <taxon>Dikarya</taxon>
        <taxon>Ascomycota</taxon>
        <taxon>Pezizomycotina</taxon>
        <taxon>Eurotiomycetes</taxon>
        <taxon>Eurotiomycetidae</taxon>
        <taxon>Eurotiales</taxon>
        <taxon>Aspergillaceae</taxon>
        <taxon>Aspergillus</taxon>
        <taxon>Aspergillus subgen. Circumdati</taxon>
    </lineage>
</organism>
<sequence length="564" mass="62915">MQSFRQYRRMRRDLQESIKLHGPYAAAGDRHVQPTDDILEDADDARLEKGIHSMNGHGQSPYSTPGIVLHDGQRVTVPGVNLRRASEICERVNTKTLFIVGFDGPDDQLNPKNWSIGRKWATLGIVGTTGMLVGWASSIDSTVIKQGQEAFGVSEVAESLATALFLFAFGFGSLVAAPFSETVGRNPVYIATLSILMIFTMASGLAPNFGAQLAFRFLAGLFGCTPMTTFGGSMADIFDPMDRTYAFPVCCTLSFLGPFLAPMVGAFIGQSTHISWRWTEWCTLIMAALVTGAIFLFVPETYGPVLLQWKAKQLREITGDPRFMAEIELRQTSLVTRLMHSCSRPFHLFFREIMVALFTMYLVVVYIVLFGFLTGYEFIFGRTYGFTQGSVGLTFIGMNIGFLIAFAMVPHIYFSYKKRLQNAIENGHNGLPPEERLWFAMYGAPWLPISLFWMGWTSYPSISYWSPLVASVAFGFSVQGIFISTYQYLIDTYELFAASALVSATFFRYIAAGAMVIVSIPMYGNLGVHWSLTLLGCISVLMTPVPYIFYKYGHVIRQRNKKTP</sequence>
<name>KOJT_ASPFN</name>
<proteinExistence type="evidence at protein level"/>